<protein>
    <recommendedName>
        <fullName evidence="1">UPF0149 protein VFMJ11_2207</fullName>
    </recommendedName>
</protein>
<proteinExistence type="inferred from homology"/>
<comment type="similarity">
    <text evidence="1">Belongs to the UPF0149 family.</text>
</comment>
<reference key="1">
    <citation type="submission" date="2008-08" db="EMBL/GenBank/DDBJ databases">
        <title>Complete sequence of Vibrio fischeri strain MJ11.</title>
        <authorList>
            <person name="Mandel M.J."/>
            <person name="Stabb E.V."/>
            <person name="Ruby E.G."/>
            <person name="Ferriera S."/>
            <person name="Johnson J."/>
            <person name="Kravitz S."/>
            <person name="Beeson K."/>
            <person name="Sutton G."/>
            <person name="Rogers Y.-H."/>
            <person name="Friedman R."/>
            <person name="Frazier M."/>
            <person name="Venter J.C."/>
        </authorList>
    </citation>
    <scope>NUCLEOTIDE SEQUENCE [LARGE SCALE GENOMIC DNA]</scope>
    <source>
        <strain>MJ11</strain>
    </source>
</reference>
<evidence type="ECO:0000255" key="1">
    <source>
        <dbReference type="HAMAP-Rule" id="MF_00346"/>
    </source>
</evidence>
<accession>B5FAI5</accession>
<feature type="chain" id="PRO_1000120486" description="UPF0149 protein VFMJ11_2207">
    <location>
        <begin position="1"/>
        <end position="189"/>
    </location>
</feature>
<gene>
    <name type="ordered locus">VFMJ11_2207</name>
</gene>
<organism>
    <name type="scientific">Aliivibrio fischeri (strain MJ11)</name>
    <name type="common">Vibrio fischeri</name>
    <dbReference type="NCBI Taxonomy" id="388396"/>
    <lineage>
        <taxon>Bacteria</taxon>
        <taxon>Pseudomonadati</taxon>
        <taxon>Pseudomonadota</taxon>
        <taxon>Gammaproteobacteria</taxon>
        <taxon>Vibrionales</taxon>
        <taxon>Vibrionaceae</taxon>
        <taxon>Aliivibrio</taxon>
    </lineage>
</organism>
<name>Y2207_ALIFM</name>
<dbReference type="EMBL" id="CP001139">
    <property type="protein sequence ID" value="ACH66890.1"/>
    <property type="molecule type" value="Genomic_DNA"/>
</dbReference>
<dbReference type="RefSeq" id="WP_012534050.1">
    <property type="nucleotide sequence ID" value="NC_011184.1"/>
</dbReference>
<dbReference type="SMR" id="B5FAI5"/>
<dbReference type="KEGG" id="vfm:VFMJ11_2207"/>
<dbReference type="HOGENOM" id="CLU_085336_1_0_6"/>
<dbReference type="Proteomes" id="UP000001857">
    <property type="component" value="Chromosome I"/>
</dbReference>
<dbReference type="GO" id="GO:0005829">
    <property type="term" value="C:cytosol"/>
    <property type="evidence" value="ECO:0007669"/>
    <property type="project" value="TreeGrafter"/>
</dbReference>
<dbReference type="Gene3D" id="1.20.120.740">
    <property type="entry name" value="YgfB uncharacterised protein family UPF0149, PF03695"/>
    <property type="match status" value="1"/>
</dbReference>
<dbReference type="HAMAP" id="MF_00346">
    <property type="entry name" value="UPF0149"/>
    <property type="match status" value="1"/>
</dbReference>
<dbReference type="InterPro" id="IPR011978">
    <property type="entry name" value="YgfB-like"/>
</dbReference>
<dbReference type="InterPro" id="IPR036255">
    <property type="entry name" value="YgfB-like_sf"/>
</dbReference>
<dbReference type="NCBIfam" id="NF002477">
    <property type="entry name" value="PRK01736.1"/>
    <property type="match status" value="1"/>
</dbReference>
<dbReference type="PANTHER" id="PTHR37528">
    <property type="entry name" value="UPF0149 PROTEIN YGFB"/>
    <property type="match status" value="1"/>
</dbReference>
<dbReference type="PANTHER" id="PTHR37528:SF1">
    <property type="entry name" value="UPF0149 PROTEIN YGFB"/>
    <property type="match status" value="1"/>
</dbReference>
<dbReference type="Pfam" id="PF03695">
    <property type="entry name" value="UPF0149"/>
    <property type="match status" value="1"/>
</dbReference>
<dbReference type="SUPFAM" id="SSF101327">
    <property type="entry name" value="YgfB-like"/>
    <property type="match status" value="1"/>
</dbReference>
<sequence length="189" mass="20759">MSEIKMPEFLTVESALKDSGLAVTPSELHGLLVGMISGGLSLDDQTWKPLIYDYTNDGMGWPDSAIKVGSAVFQCTVAELTAEKLALELLIPSEKESLMNRADGLSEWVNHFISGLGLVELKLDKTSDALKEALADLEEIARLGIDEDDDLEEQENLFEQIVEHVRICVLTIHAELGQQIHTDASKTVH</sequence>